<dbReference type="EC" id="3.2.1.1" evidence="2"/>
<dbReference type="EMBL" id="AF174489">
    <property type="protein sequence ID" value="AAG48524.1"/>
    <property type="molecule type" value="Genomic_DNA"/>
</dbReference>
<dbReference type="SMR" id="Q9GQV3"/>
<dbReference type="CAZy" id="GH13">
    <property type="family name" value="Glycoside Hydrolase Family 13"/>
</dbReference>
<dbReference type="GO" id="GO:0005576">
    <property type="term" value="C:extracellular region"/>
    <property type="evidence" value="ECO:0007669"/>
    <property type="project" value="UniProtKB-SubCell"/>
</dbReference>
<dbReference type="GO" id="GO:0004556">
    <property type="term" value="F:alpha-amylase activity"/>
    <property type="evidence" value="ECO:0007669"/>
    <property type="project" value="UniProtKB-EC"/>
</dbReference>
<dbReference type="GO" id="GO:0046872">
    <property type="term" value="F:metal ion binding"/>
    <property type="evidence" value="ECO:0007669"/>
    <property type="project" value="UniProtKB-KW"/>
</dbReference>
<dbReference type="GO" id="GO:0005975">
    <property type="term" value="P:carbohydrate metabolic process"/>
    <property type="evidence" value="ECO:0007669"/>
    <property type="project" value="InterPro"/>
</dbReference>
<dbReference type="CDD" id="cd11317">
    <property type="entry name" value="AmyAc_bac_euk_AmyA"/>
    <property type="match status" value="1"/>
</dbReference>
<dbReference type="FunFam" id="3.20.20.80:FF:000119">
    <property type="entry name" value="Alpha-amylase-related protein"/>
    <property type="match status" value="1"/>
</dbReference>
<dbReference type="FunFam" id="2.60.40.1180:FF:000020">
    <property type="entry name" value="Pancreatic alpha-amylase"/>
    <property type="match status" value="1"/>
</dbReference>
<dbReference type="Gene3D" id="3.20.20.80">
    <property type="entry name" value="Glycosidases"/>
    <property type="match status" value="1"/>
</dbReference>
<dbReference type="Gene3D" id="2.60.40.1180">
    <property type="entry name" value="Golgi alpha-mannosidase II"/>
    <property type="match status" value="1"/>
</dbReference>
<dbReference type="InterPro" id="IPR006048">
    <property type="entry name" value="A-amylase/branching_C"/>
</dbReference>
<dbReference type="InterPro" id="IPR031319">
    <property type="entry name" value="A-amylase_C"/>
</dbReference>
<dbReference type="InterPro" id="IPR006046">
    <property type="entry name" value="Alpha_amylase"/>
</dbReference>
<dbReference type="InterPro" id="IPR006047">
    <property type="entry name" value="Glyco_hydro_13_cat_dom"/>
</dbReference>
<dbReference type="InterPro" id="IPR013780">
    <property type="entry name" value="Glyco_hydro_b"/>
</dbReference>
<dbReference type="InterPro" id="IPR017853">
    <property type="entry name" value="Glycoside_hydrolase_SF"/>
</dbReference>
<dbReference type="PANTHER" id="PTHR43447">
    <property type="entry name" value="ALPHA-AMYLASE"/>
    <property type="match status" value="1"/>
</dbReference>
<dbReference type="Pfam" id="PF00128">
    <property type="entry name" value="Alpha-amylase"/>
    <property type="match status" value="1"/>
</dbReference>
<dbReference type="Pfam" id="PF02806">
    <property type="entry name" value="Alpha-amylase_C"/>
    <property type="match status" value="1"/>
</dbReference>
<dbReference type="PRINTS" id="PR00110">
    <property type="entry name" value="ALPHAAMYLASE"/>
</dbReference>
<dbReference type="SMART" id="SM00642">
    <property type="entry name" value="Aamy"/>
    <property type="match status" value="1"/>
</dbReference>
<dbReference type="SMART" id="SM00632">
    <property type="entry name" value="Aamy_C"/>
    <property type="match status" value="1"/>
</dbReference>
<dbReference type="SUPFAM" id="SSF51445">
    <property type="entry name" value="(Trans)glycosidases"/>
    <property type="match status" value="1"/>
</dbReference>
<dbReference type="SUPFAM" id="SSF51011">
    <property type="entry name" value="Glycosyl hydrolase domain"/>
    <property type="match status" value="1"/>
</dbReference>
<feature type="signal peptide" evidence="1">
    <location>
        <begin position="1"/>
        <end position="20"/>
    </location>
</feature>
<feature type="chain" id="PRO_0000001378" description="Alpha-amylase-related protein">
    <location>
        <begin position="21"/>
        <end position="494"/>
    </location>
</feature>
<feature type="active site" description="Nucleophile" evidence="2">
    <location>
        <position position="208"/>
    </location>
</feature>
<feature type="active site" description="Proton donor" evidence="2">
    <location>
        <position position="245"/>
    </location>
</feature>
<feature type="binding site" evidence="3">
    <location>
        <position position="118"/>
    </location>
    <ligand>
        <name>Ca(2+)</name>
        <dbReference type="ChEBI" id="CHEBI:29108"/>
    </ligand>
</feature>
<feature type="binding site" evidence="3">
    <location>
        <position position="169"/>
    </location>
    <ligand>
        <name>Ca(2+)</name>
        <dbReference type="ChEBI" id="CHEBI:29108"/>
    </ligand>
</feature>
<feature type="binding site" evidence="3">
    <location>
        <position position="178"/>
    </location>
    <ligand>
        <name>Ca(2+)</name>
        <dbReference type="ChEBI" id="CHEBI:29108"/>
    </ligand>
</feature>
<feature type="binding site" evidence="3">
    <location>
        <position position="206"/>
    </location>
    <ligand>
        <name>chloride</name>
        <dbReference type="ChEBI" id="CHEBI:17996"/>
    </ligand>
</feature>
<feature type="binding site" evidence="3">
    <location>
        <position position="212"/>
    </location>
    <ligand>
        <name>Ca(2+)</name>
        <dbReference type="ChEBI" id="CHEBI:29108"/>
    </ligand>
</feature>
<feature type="binding site" evidence="3">
    <location>
        <position position="308"/>
    </location>
    <ligand>
        <name>chloride</name>
        <dbReference type="ChEBI" id="CHEBI:17996"/>
    </ligand>
</feature>
<feature type="binding site" evidence="3">
    <location>
        <position position="343"/>
    </location>
    <ligand>
        <name>chloride</name>
        <dbReference type="ChEBI" id="CHEBI:17996"/>
    </ligand>
</feature>
<feature type="site" description="Transition state stabilizer" evidence="2">
    <location>
        <position position="310"/>
    </location>
</feature>
<feature type="modified residue" description="Pyrrolidone carboxylic acid" evidence="1">
    <location>
        <position position="21"/>
    </location>
</feature>
<feature type="disulfide bond" evidence="3">
    <location>
        <begin position="48"/>
        <end position="104"/>
    </location>
</feature>
<feature type="disulfide bond" evidence="3">
    <location>
        <begin position="157"/>
        <end position="171"/>
    </location>
</feature>
<feature type="disulfide bond" evidence="3">
    <location>
        <begin position="376"/>
        <end position="382"/>
    </location>
</feature>
<feature type="disulfide bond" evidence="4">
    <location>
        <begin position="418"/>
        <end position="441"/>
    </location>
</feature>
<feature type="disulfide bond" evidence="3">
    <location>
        <begin position="448"/>
        <end position="460"/>
    </location>
</feature>
<comment type="catalytic activity">
    <reaction evidence="2">
        <text>Endohydrolysis of (1-&gt;4)-alpha-D-glucosidic linkages in polysaccharides containing three or more (1-&gt;4)-alpha-linked D-glucose units.</text>
        <dbReference type="EC" id="3.2.1.1"/>
    </reaction>
</comment>
<comment type="cofactor">
    <cofactor evidence="3">
        <name>Ca(2+)</name>
        <dbReference type="ChEBI" id="CHEBI:29108"/>
    </cofactor>
    <text evidence="3">Binds 1 Ca(2+) ion per subunit.</text>
</comment>
<comment type="cofactor">
    <cofactor evidence="3">
        <name>chloride</name>
        <dbReference type="ChEBI" id="CHEBI:17996"/>
    </cofactor>
    <text evidence="3">Binds 1 Cl(-) ion per subunit.</text>
</comment>
<comment type="subunit">
    <text evidence="1">Monomer.</text>
</comment>
<comment type="subcellular location">
    <subcellularLocation>
        <location evidence="5">Secreted</location>
    </subcellularLocation>
</comment>
<comment type="similarity">
    <text evidence="5">Belongs to the glycosyl hydrolase 13 family.</text>
</comment>
<name>AMYR_DROJA</name>
<gene>
    <name type="primary">Amyrel</name>
</gene>
<proteinExistence type="inferred from homology"/>
<sequence>MIKFALALTLCLAGASLSLAQHNPQWWGNRNTIVHLFEWKWSDIAEECETFLAPRGFAGVQVSPVNENIISAGRPWWERYQPISYKLTTRSGNEEEFADMVRRCNDVGIRIYVDVLLNHMSGDFDGVAVGTAGTEAEPSKKSFPGVPYTAQDFHPSCEITDWNNRFQVQECELVGLKDLNQHSDYVRSKLIEFLDHLIELGVAGFRVDAAKHMAAEDLEYIYGSLSNLNIEHGFPHNARPFIFQEVIDHGHETVSREEYNQLGAVTEFRFSEEIGKAFRGNNALKWLQSWGTDWGFLNSEQALTFVDNHDNQRDQGSVLNYKSPKQYKMATAFHLAYPYGISRVMSSFAFDDHDTPPPQDAQENIISPEFDEDGACVNGWICEHRWRQIYAMVGFKNAVRDTELTGWWDNGDNQISFCRGNKGFLAVNNNLYDLSQELNTCLPAGEYCDVISGSLIDGACTGKSVTVNEYGYGYIHIGSDDFDGVLALHVNAKV</sequence>
<reference key="1">
    <citation type="submission" date="1999-08" db="EMBL/GenBank/DDBJ databases">
        <title>Evolution of the amylase-related Amyrel gene in Drosophila.</title>
        <authorList>
            <person name="Da Lage J.-L."/>
            <person name="Renard E."/>
            <person name="Cariou M.-L."/>
        </authorList>
    </citation>
    <scope>NUCLEOTIDE SEQUENCE [GENOMIC DNA]</scope>
</reference>
<evidence type="ECO:0000250" key="1"/>
<evidence type="ECO:0000250" key="2">
    <source>
        <dbReference type="UniProtKB" id="P04746"/>
    </source>
</evidence>
<evidence type="ECO:0000250" key="3">
    <source>
        <dbReference type="UniProtKB" id="P56634"/>
    </source>
</evidence>
<evidence type="ECO:0000255" key="4"/>
<evidence type="ECO:0000305" key="5"/>
<protein>
    <recommendedName>
        <fullName>Alpha-amylase-related protein</fullName>
        <ecNumber evidence="2">3.2.1.1</ecNumber>
    </recommendedName>
</protein>
<keyword id="KW-0106">Calcium</keyword>
<keyword id="KW-0119">Carbohydrate metabolism</keyword>
<keyword id="KW-0868">Chloride</keyword>
<keyword id="KW-1015">Disulfide bond</keyword>
<keyword id="KW-0326">Glycosidase</keyword>
<keyword id="KW-0378">Hydrolase</keyword>
<keyword id="KW-0479">Metal-binding</keyword>
<keyword id="KW-0873">Pyrrolidone carboxylic acid</keyword>
<keyword id="KW-0964">Secreted</keyword>
<keyword id="KW-0732">Signal</keyword>
<organism>
    <name type="scientific">Drosophila jambulina</name>
    <name type="common">Fruit fly</name>
    <dbReference type="NCBI Taxonomy" id="111875"/>
    <lineage>
        <taxon>Eukaryota</taxon>
        <taxon>Metazoa</taxon>
        <taxon>Ecdysozoa</taxon>
        <taxon>Arthropoda</taxon>
        <taxon>Hexapoda</taxon>
        <taxon>Insecta</taxon>
        <taxon>Pterygota</taxon>
        <taxon>Neoptera</taxon>
        <taxon>Endopterygota</taxon>
        <taxon>Diptera</taxon>
        <taxon>Brachycera</taxon>
        <taxon>Muscomorpha</taxon>
        <taxon>Ephydroidea</taxon>
        <taxon>Drosophilidae</taxon>
        <taxon>Drosophila</taxon>
        <taxon>Sophophora</taxon>
    </lineage>
</organism>
<accession>Q9GQV3</accession>